<feature type="chain" id="PRO_1000137569" description="Protein GrpE">
    <location>
        <begin position="1"/>
        <end position="188"/>
    </location>
</feature>
<feature type="region of interest" description="Disordered" evidence="2">
    <location>
        <begin position="1"/>
        <end position="26"/>
    </location>
</feature>
<feature type="compositionally biased region" description="Low complexity" evidence="2">
    <location>
        <begin position="1"/>
        <end position="22"/>
    </location>
</feature>
<comment type="function">
    <text evidence="1">Participates actively in the response to hyperosmotic and heat shock by preventing the aggregation of stress-denatured proteins, in association with DnaK and GrpE. It is the nucleotide exchange factor for DnaK and may function as a thermosensor. Unfolded proteins bind initially to DnaJ; upon interaction with the DnaJ-bound protein, DnaK hydrolyzes its bound ATP, resulting in the formation of a stable complex. GrpE releases ADP from DnaK; ATP binding to DnaK triggers the release of the substrate protein, thus completing the reaction cycle. Several rounds of ATP-dependent interactions between DnaJ, DnaK and GrpE are required for fully efficient folding.</text>
</comment>
<comment type="subunit">
    <text evidence="1">Homodimer.</text>
</comment>
<comment type="subcellular location">
    <subcellularLocation>
        <location evidence="1">Cytoplasm</location>
    </subcellularLocation>
</comment>
<comment type="similarity">
    <text evidence="1">Belongs to the GrpE family.</text>
</comment>
<accession>B1YKS8</accession>
<dbReference type="EMBL" id="CP001022">
    <property type="protein sequence ID" value="ACB60261.1"/>
    <property type="molecule type" value="Genomic_DNA"/>
</dbReference>
<dbReference type="RefSeq" id="WP_012369685.1">
    <property type="nucleotide sequence ID" value="NC_010556.1"/>
</dbReference>
<dbReference type="SMR" id="B1YKS8"/>
<dbReference type="STRING" id="262543.Exig_0780"/>
<dbReference type="KEGG" id="esi:Exig_0780"/>
<dbReference type="eggNOG" id="COG0576">
    <property type="taxonomic scope" value="Bacteria"/>
</dbReference>
<dbReference type="HOGENOM" id="CLU_057217_5_2_9"/>
<dbReference type="OrthoDB" id="9812586at2"/>
<dbReference type="Proteomes" id="UP000001681">
    <property type="component" value="Chromosome"/>
</dbReference>
<dbReference type="GO" id="GO:0005737">
    <property type="term" value="C:cytoplasm"/>
    <property type="evidence" value="ECO:0007669"/>
    <property type="project" value="UniProtKB-SubCell"/>
</dbReference>
<dbReference type="GO" id="GO:0000774">
    <property type="term" value="F:adenyl-nucleotide exchange factor activity"/>
    <property type="evidence" value="ECO:0007669"/>
    <property type="project" value="InterPro"/>
</dbReference>
<dbReference type="GO" id="GO:0042803">
    <property type="term" value="F:protein homodimerization activity"/>
    <property type="evidence" value="ECO:0007669"/>
    <property type="project" value="InterPro"/>
</dbReference>
<dbReference type="GO" id="GO:0051087">
    <property type="term" value="F:protein-folding chaperone binding"/>
    <property type="evidence" value="ECO:0007669"/>
    <property type="project" value="InterPro"/>
</dbReference>
<dbReference type="GO" id="GO:0051082">
    <property type="term" value="F:unfolded protein binding"/>
    <property type="evidence" value="ECO:0007669"/>
    <property type="project" value="TreeGrafter"/>
</dbReference>
<dbReference type="GO" id="GO:0006457">
    <property type="term" value="P:protein folding"/>
    <property type="evidence" value="ECO:0007669"/>
    <property type="project" value="InterPro"/>
</dbReference>
<dbReference type="CDD" id="cd00446">
    <property type="entry name" value="GrpE"/>
    <property type="match status" value="1"/>
</dbReference>
<dbReference type="FunFam" id="2.30.22.10:FF:000001">
    <property type="entry name" value="Protein GrpE"/>
    <property type="match status" value="1"/>
</dbReference>
<dbReference type="Gene3D" id="3.90.20.20">
    <property type="match status" value="1"/>
</dbReference>
<dbReference type="Gene3D" id="2.30.22.10">
    <property type="entry name" value="Head domain of nucleotide exchange factor GrpE"/>
    <property type="match status" value="1"/>
</dbReference>
<dbReference type="HAMAP" id="MF_01151">
    <property type="entry name" value="GrpE"/>
    <property type="match status" value="1"/>
</dbReference>
<dbReference type="InterPro" id="IPR000740">
    <property type="entry name" value="GrpE"/>
</dbReference>
<dbReference type="InterPro" id="IPR013805">
    <property type="entry name" value="GrpE_coiled_coil"/>
</dbReference>
<dbReference type="InterPro" id="IPR009012">
    <property type="entry name" value="GrpE_head"/>
</dbReference>
<dbReference type="NCBIfam" id="NF010738">
    <property type="entry name" value="PRK14140.1"/>
    <property type="match status" value="1"/>
</dbReference>
<dbReference type="PANTHER" id="PTHR21237">
    <property type="entry name" value="GRPE PROTEIN"/>
    <property type="match status" value="1"/>
</dbReference>
<dbReference type="PANTHER" id="PTHR21237:SF23">
    <property type="entry name" value="GRPE PROTEIN HOMOLOG, MITOCHONDRIAL"/>
    <property type="match status" value="1"/>
</dbReference>
<dbReference type="Pfam" id="PF01025">
    <property type="entry name" value="GrpE"/>
    <property type="match status" value="1"/>
</dbReference>
<dbReference type="PRINTS" id="PR00773">
    <property type="entry name" value="GRPEPROTEIN"/>
</dbReference>
<dbReference type="SUPFAM" id="SSF58014">
    <property type="entry name" value="Coiled-coil domain of nucleotide exchange factor GrpE"/>
    <property type="match status" value="1"/>
</dbReference>
<dbReference type="SUPFAM" id="SSF51064">
    <property type="entry name" value="Head domain of nucleotide exchange factor GrpE"/>
    <property type="match status" value="1"/>
</dbReference>
<dbReference type="PROSITE" id="PS01071">
    <property type="entry name" value="GRPE"/>
    <property type="match status" value="1"/>
</dbReference>
<reference key="1">
    <citation type="submission" date="2008-04" db="EMBL/GenBank/DDBJ databases">
        <title>Complete sequence of chromosome of Exiguobacterium sibiricum 255-15.</title>
        <authorList>
            <consortium name="US DOE Joint Genome Institute"/>
            <person name="Copeland A."/>
            <person name="Lucas S."/>
            <person name="Lapidus A."/>
            <person name="Glavina del Rio T."/>
            <person name="Dalin E."/>
            <person name="Tice H."/>
            <person name="Bruce D."/>
            <person name="Goodwin L."/>
            <person name="Pitluck S."/>
            <person name="Kiss H."/>
            <person name="Chertkov O."/>
            <person name="Monk C."/>
            <person name="Brettin T."/>
            <person name="Detter J.C."/>
            <person name="Han C."/>
            <person name="Kuske C.R."/>
            <person name="Schmutz J."/>
            <person name="Larimer F."/>
            <person name="Land M."/>
            <person name="Hauser L."/>
            <person name="Kyrpides N."/>
            <person name="Mikhailova N."/>
            <person name="Vishnivetskaya T."/>
            <person name="Rodrigues D.F."/>
            <person name="Gilichinsky D."/>
            <person name="Tiedje J."/>
            <person name="Richardson P."/>
        </authorList>
    </citation>
    <scope>NUCLEOTIDE SEQUENCE [LARGE SCALE GENOMIC DNA]</scope>
    <source>
        <strain>DSM 17290 / CCUG 55495 / CIP 109462 / JCM 13490 / 255-15</strain>
    </source>
</reference>
<protein>
    <recommendedName>
        <fullName evidence="1">Protein GrpE</fullName>
    </recommendedName>
    <alternativeName>
        <fullName evidence="1">HSP-70 cofactor</fullName>
    </alternativeName>
</protein>
<keyword id="KW-0143">Chaperone</keyword>
<keyword id="KW-0963">Cytoplasm</keyword>
<keyword id="KW-1185">Reference proteome</keyword>
<keyword id="KW-0346">Stress response</keyword>
<gene>
    <name evidence="1" type="primary">grpE</name>
    <name type="ordered locus">Exig_0780</name>
</gene>
<sequence>MEENKQNQNLNTEETTEQQTEAETVEVTEEEVVQADLVEEPAAPDFEAQLAEAKASELRLRADFDNFKRRNRIEAENRAKYSSQTIVEKLLPLVDNLDRALQIESDNEETKSVLAGVEMVKRQLVETLQNEGVIEIPAVGEAFDPNLHQAVVQEPSEEHESGVVTAEFQKGYKLHDRVIRPSMVKVAE</sequence>
<proteinExistence type="inferred from homology"/>
<organism>
    <name type="scientific">Exiguobacterium sibiricum (strain DSM 17290 / CCUG 55495 / CIP 109462 / JCM 13490 / 255-15)</name>
    <dbReference type="NCBI Taxonomy" id="262543"/>
    <lineage>
        <taxon>Bacteria</taxon>
        <taxon>Bacillati</taxon>
        <taxon>Bacillota</taxon>
        <taxon>Bacilli</taxon>
        <taxon>Bacillales</taxon>
        <taxon>Bacillales Family XII. Incertae Sedis</taxon>
        <taxon>Exiguobacterium</taxon>
    </lineage>
</organism>
<name>GRPE_EXIS2</name>
<evidence type="ECO:0000255" key="1">
    <source>
        <dbReference type="HAMAP-Rule" id="MF_01151"/>
    </source>
</evidence>
<evidence type="ECO:0000256" key="2">
    <source>
        <dbReference type="SAM" id="MobiDB-lite"/>
    </source>
</evidence>